<keyword id="KW-1184">Jasmonic acid signaling pathway</keyword>
<keyword id="KW-0539">Nucleus</keyword>
<keyword id="KW-1185">Reference proteome</keyword>
<keyword id="KW-0804">Transcription</keyword>
<keyword id="KW-0805">Transcription regulation</keyword>
<keyword id="KW-0832">Ubl conjugation</keyword>
<gene>
    <name evidence="6" type="primary">TIFY11C</name>
    <name evidence="6" type="synonym">JAZ11</name>
    <name evidence="7" type="ORF">OsI_10263</name>
</gene>
<sequence>MAGSSEQQLVANAAATTVAGNGSRFAVTCGLLRQYMKEHSGSNGGGGFLPAVTAMSLMTGGADAEEEAPEVRKTMELFPQQAGTLKDTQERKEITEKAQLTIFYGGSVVVFDDFPAEKAGELMKLAGSRDSTAAAAVSDAGAAAGQPCLPDMPIARKVSLQRFLEKRKNRIVVAEPLPESEKKEAESSKRAKKDDGGASWLQVNPTLSL</sequence>
<organism>
    <name type="scientific">Oryza sativa subsp. indica</name>
    <name type="common">Rice</name>
    <dbReference type="NCBI Taxonomy" id="39946"/>
    <lineage>
        <taxon>Eukaryota</taxon>
        <taxon>Viridiplantae</taxon>
        <taxon>Streptophyta</taxon>
        <taxon>Embryophyta</taxon>
        <taxon>Tracheophyta</taxon>
        <taxon>Spermatophyta</taxon>
        <taxon>Magnoliopsida</taxon>
        <taxon>Liliopsida</taxon>
        <taxon>Poales</taxon>
        <taxon>Poaceae</taxon>
        <taxon>BOP clade</taxon>
        <taxon>Oryzoideae</taxon>
        <taxon>Oryzeae</taxon>
        <taxon>Oryzinae</taxon>
        <taxon>Oryza</taxon>
        <taxon>Oryza sativa</taxon>
    </lineage>
</organism>
<reference key="1">
    <citation type="journal article" date="2005" name="PLoS Biol.">
        <title>The genomes of Oryza sativa: a history of duplications.</title>
        <authorList>
            <person name="Yu J."/>
            <person name="Wang J."/>
            <person name="Lin W."/>
            <person name="Li S."/>
            <person name="Li H."/>
            <person name="Zhou J."/>
            <person name="Ni P."/>
            <person name="Dong W."/>
            <person name="Hu S."/>
            <person name="Zeng C."/>
            <person name="Zhang J."/>
            <person name="Zhang Y."/>
            <person name="Li R."/>
            <person name="Xu Z."/>
            <person name="Li S."/>
            <person name="Li X."/>
            <person name="Zheng H."/>
            <person name="Cong L."/>
            <person name="Lin L."/>
            <person name="Yin J."/>
            <person name="Geng J."/>
            <person name="Li G."/>
            <person name="Shi J."/>
            <person name="Liu J."/>
            <person name="Lv H."/>
            <person name="Li J."/>
            <person name="Wang J."/>
            <person name="Deng Y."/>
            <person name="Ran L."/>
            <person name="Shi X."/>
            <person name="Wang X."/>
            <person name="Wu Q."/>
            <person name="Li C."/>
            <person name="Ren X."/>
            <person name="Wang J."/>
            <person name="Wang X."/>
            <person name="Li D."/>
            <person name="Liu D."/>
            <person name="Zhang X."/>
            <person name="Ji Z."/>
            <person name="Zhao W."/>
            <person name="Sun Y."/>
            <person name="Zhang Z."/>
            <person name="Bao J."/>
            <person name="Han Y."/>
            <person name="Dong L."/>
            <person name="Ji J."/>
            <person name="Chen P."/>
            <person name="Wu S."/>
            <person name="Liu J."/>
            <person name="Xiao Y."/>
            <person name="Bu D."/>
            <person name="Tan J."/>
            <person name="Yang L."/>
            <person name="Ye C."/>
            <person name="Zhang J."/>
            <person name="Xu J."/>
            <person name="Zhou Y."/>
            <person name="Yu Y."/>
            <person name="Zhang B."/>
            <person name="Zhuang S."/>
            <person name="Wei H."/>
            <person name="Liu B."/>
            <person name="Lei M."/>
            <person name="Yu H."/>
            <person name="Li Y."/>
            <person name="Xu H."/>
            <person name="Wei S."/>
            <person name="He X."/>
            <person name="Fang L."/>
            <person name="Zhang Z."/>
            <person name="Zhang Y."/>
            <person name="Huang X."/>
            <person name="Su Z."/>
            <person name="Tong W."/>
            <person name="Li J."/>
            <person name="Tong Z."/>
            <person name="Li S."/>
            <person name="Ye J."/>
            <person name="Wang L."/>
            <person name="Fang L."/>
            <person name="Lei T."/>
            <person name="Chen C.-S."/>
            <person name="Chen H.-C."/>
            <person name="Xu Z."/>
            <person name="Li H."/>
            <person name="Huang H."/>
            <person name="Zhang F."/>
            <person name="Xu H."/>
            <person name="Li N."/>
            <person name="Zhao C."/>
            <person name="Li S."/>
            <person name="Dong L."/>
            <person name="Huang Y."/>
            <person name="Li L."/>
            <person name="Xi Y."/>
            <person name="Qi Q."/>
            <person name="Li W."/>
            <person name="Zhang B."/>
            <person name="Hu W."/>
            <person name="Zhang Y."/>
            <person name="Tian X."/>
            <person name="Jiao Y."/>
            <person name="Liang X."/>
            <person name="Jin J."/>
            <person name="Gao L."/>
            <person name="Zheng W."/>
            <person name="Hao B."/>
            <person name="Liu S.-M."/>
            <person name="Wang W."/>
            <person name="Yuan L."/>
            <person name="Cao M."/>
            <person name="McDermott J."/>
            <person name="Samudrala R."/>
            <person name="Wang J."/>
            <person name="Wong G.K.-S."/>
            <person name="Yang H."/>
        </authorList>
    </citation>
    <scope>NUCLEOTIDE SEQUENCE [LARGE SCALE GENOMIC DNA]</scope>
    <source>
        <strain>cv. 93-11</strain>
    </source>
</reference>
<protein>
    <recommendedName>
        <fullName evidence="6">Protein TIFY 11c</fullName>
    </recommendedName>
</protein>
<comment type="function">
    <text evidence="1">Repressor of jasmonate responses.</text>
</comment>
<comment type="subcellular location">
    <subcellularLocation>
        <location evidence="4">Nucleus</location>
    </subcellularLocation>
</comment>
<comment type="domain">
    <text evidence="1">The jas domain (153-177) is required for interaction with COI1.</text>
</comment>
<comment type="PTM">
    <text evidence="1">Ubiquitinated. Targeted for degradation by the SCF(COI1) E3 ubiquitin ligase-proteasome pathway during jasmonate signaling.</text>
</comment>
<comment type="similarity">
    <text evidence="6">Belongs to the TIFY/JAZ family.</text>
</comment>
<name>TI11C_ORYSI</name>
<evidence type="ECO:0000250" key="1">
    <source>
        <dbReference type="UniProtKB" id="Q7XPM8"/>
    </source>
</evidence>
<evidence type="ECO:0000255" key="2"/>
<evidence type="ECO:0000255" key="3">
    <source>
        <dbReference type="PROSITE-ProRule" id="PRU00650"/>
    </source>
</evidence>
<evidence type="ECO:0000255" key="4">
    <source>
        <dbReference type="PROSITE-ProRule" id="PRU00768"/>
    </source>
</evidence>
<evidence type="ECO:0000256" key="5">
    <source>
        <dbReference type="SAM" id="MobiDB-lite"/>
    </source>
</evidence>
<evidence type="ECO:0000305" key="6"/>
<evidence type="ECO:0000312" key="7">
    <source>
        <dbReference type="EMBL" id="EAY88789.1"/>
    </source>
</evidence>
<accession>A2XD79</accession>
<feature type="chain" id="PRO_0000434857" description="Protein TIFY 11c">
    <location>
        <begin position="1"/>
        <end position="209"/>
    </location>
</feature>
<feature type="domain" description="Tify" evidence="3">
    <location>
        <begin position="93"/>
        <end position="128"/>
    </location>
</feature>
<feature type="region of interest" description="Disordered" evidence="5">
    <location>
        <begin position="175"/>
        <end position="209"/>
    </location>
</feature>
<feature type="short sequence motif" description="Jas" evidence="2">
    <location>
        <begin position="153"/>
        <end position="177"/>
    </location>
</feature>
<feature type="short sequence motif" description="Nuclear localization signal" evidence="4">
    <location>
        <begin position="155"/>
        <end position="162"/>
    </location>
</feature>
<feature type="compositionally biased region" description="Basic and acidic residues" evidence="5">
    <location>
        <begin position="179"/>
        <end position="196"/>
    </location>
</feature>
<proteinExistence type="inferred from homology"/>
<dbReference type="EMBL" id="CM000128">
    <property type="protein sequence ID" value="EAY88789.1"/>
    <property type="molecule type" value="Genomic_DNA"/>
</dbReference>
<dbReference type="SMR" id="A2XD79"/>
<dbReference type="STRING" id="39946.A2XD79"/>
<dbReference type="iPTMnet" id="A2XD79"/>
<dbReference type="EnsemblPlants" id="BGIOSGA011983-TA">
    <property type="protein sequence ID" value="BGIOSGA011983-PA"/>
    <property type="gene ID" value="BGIOSGA011983"/>
</dbReference>
<dbReference type="EnsemblPlants" id="OsGoSa_03g0005930.01">
    <property type="protein sequence ID" value="OsGoSa_03g0005930.01"/>
    <property type="gene ID" value="OsGoSa_03g0005930"/>
</dbReference>
<dbReference type="EnsemblPlants" id="OsLaMu_03g0005950.01">
    <property type="protein sequence ID" value="OsLaMu_03g0005950.01"/>
    <property type="gene ID" value="OsLaMu_03g0005950"/>
</dbReference>
<dbReference type="EnsemblPlants" id="OsLiXu_03g0005950.01">
    <property type="protein sequence ID" value="OsLiXu_03g0005950.01"/>
    <property type="gene ID" value="OsLiXu_03g0005950"/>
</dbReference>
<dbReference type="Gramene" id="BGIOSGA011983-TA">
    <property type="protein sequence ID" value="BGIOSGA011983-PA"/>
    <property type="gene ID" value="BGIOSGA011983"/>
</dbReference>
<dbReference type="Gramene" id="OsGoSa_03g0005930.01">
    <property type="protein sequence ID" value="OsGoSa_03g0005930.01"/>
    <property type="gene ID" value="OsGoSa_03g0005930"/>
</dbReference>
<dbReference type="Gramene" id="OsLaMu_03g0005950.01">
    <property type="protein sequence ID" value="OsLaMu_03g0005950.01"/>
    <property type="gene ID" value="OsLaMu_03g0005950"/>
</dbReference>
<dbReference type="Gramene" id="OsLiXu_03g0005950.01">
    <property type="protein sequence ID" value="OsLiXu_03g0005950.01"/>
    <property type="gene ID" value="OsLiXu_03g0005950"/>
</dbReference>
<dbReference type="HOGENOM" id="CLU_051749_3_0_1"/>
<dbReference type="OMA" id="LMKFAGS"/>
<dbReference type="OrthoDB" id="1937734at2759"/>
<dbReference type="Proteomes" id="UP000007015">
    <property type="component" value="Chromosome 3"/>
</dbReference>
<dbReference type="GO" id="GO:0005634">
    <property type="term" value="C:nucleus"/>
    <property type="evidence" value="ECO:0007669"/>
    <property type="project" value="UniProtKB-SubCell"/>
</dbReference>
<dbReference type="GO" id="GO:0031347">
    <property type="term" value="P:regulation of defense response"/>
    <property type="evidence" value="ECO:0007669"/>
    <property type="project" value="TreeGrafter"/>
</dbReference>
<dbReference type="GO" id="GO:2000022">
    <property type="term" value="P:regulation of jasmonic acid mediated signaling pathway"/>
    <property type="evidence" value="ECO:0007669"/>
    <property type="project" value="TreeGrafter"/>
</dbReference>
<dbReference type="GO" id="GO:0009611">
    <property type="term" value="P:response to wounding"/>
    <property type="evidence" value="ECO:0007669"/>
    <property type="project" value="TreeGrafter"/>
</dbReference>
<dbReference type="InterPro" id="IPR018467">
    <property type="entry name" value="CCT_CS"/>
</dbReference>
<dbReference type="InterPro" id="IPR040390">
    <property type="entry name" value="TIFY/JAZ"/>
</dbReference>
<dbReference type="InterPro" id="IPR010399">
    <property type="entry name" value="Tify_dom"/>
</dbReference>
<dbReference type="PANTHER" id="PTHR33077:SF117">
    <property type="entry name" value="PROTEIN TIFY 11C"/>
    <property type="match status" value="1"/>
</dbReference>
<dbReference type="PANTHER" id="PTHR33077">
    <property type="entry name" value="PROTEIN TIFY 4A-RELATED-RELATED"/>
    <property type="match status" value="1"/>
</dbReference>
<dbReference type="Pfam" id="PF09425">
    <property type="entry name" value="Jas_motif"/>
    <property type="match status" value="1"/>
</dbReference>
<dbReference type="Pfam" id="PF06200">
    <property type="entry name" value="tify"/>
    <property type="match status" value="1"/>
</dbReference>
<dbReference type="SMART" id="SM00979">
    <property type="entry name" value="TIFY"/>
    <property type="match status" value="1"/>
</dbReference>
<dbReference type="PROSITE" id="PS51320">
    <property type="entry name" value="TIFY"/>
    <property type="match status" value="1"/>
</dbReference>